<proteinExistence type="evidence at protein level"/>
<gene>
    <name type="primary">SLM5</name>
    <name type="ordered locus">YCR024C</name>
    <name type="ORF">YCR242</name>
    <name type="ORF">YCR24C</name>
</gene>
<accession>P25345</accession>
<accession>D6VR33</accession>
<evidence type="ECO:0000255" key="1"/>
<evidence type="ECO:0000269" key="2">
    <source>
    </source>
</evidence>
<evidence type="ECO:0000269" key="3">
    <source>
    </source>
</evidence>
<evidence type="ECO:0000305" key="4"/>
<evidence type="ECO:0000305" key="5">
    <source>
    </source>
</evidence>
<organism>
    <name type="scientific">Saccharomyces cerevisiae (strain ATCC 204508 / S288c)</name>
    <name type="common">Baker's yeast</name>
    <dbReference type="NCBI Taxonomy" id="559292"/>
    <lineage>
        <taxon>Eukaryota</taxon>
        <taxon>Fungi</taxon>
        <taxon>Dikarya</taxon>
        <taxon>Ascomycota</taxon>
        <taxon>Saccharomycotina</taxon>
        <taxon>Saccharomycetes</taxon>
        <taxon>Saccharomycetales</taxon>
        <taxon>Saccharomycetaceae</taxon>
        <taxon>Saccharomyces</taxon>
    </lineage>
</organism>
<sequence>MFHAFTFLKGGRFYSSLTVKSLYEQVHHTSHDPISINGWIKSIRLLKRIAFLDLQDGTSVNPLRIVIPLTNTDEVQFLKILKTGQTLSISNATWQSTPNRKQPFELQIKNPVKSIKLVGPVSENYPLQKKYQTLRYLRSLPTLKYRTAYLSAILRLRSFVEFQFMLYFQKNHFTKVSPPILTSNDCEGAGELFQVSTNTSPTASSYFGKPTYLTVSTQLHLEILALSLSRCWTLSPCFRAEKSDTPRHLSEFWMLEVEMCFVNSVNELTSFVETTIKHIIKACIDNQQELLPKQFISSQENNASSELSINQETQQIKTRWEDLINEKWHNITYTNAIEILKKRHNEVSHFKYEPKWGQPLQTEHEKFLAGEYFKSPVFVTDYPRLCKPFYMKQNSTPDDTVGCFDLLVPGMGEIIGGSLREDDYDKLCREMKARGMNRSGELDWYVSLRKEGSAPHGGFGLGFERFISYLYGNHNIKDAIPFYRTSAESIDF</sequence>
<reference key="1">
    <citation type="journal article" date="1992" name="Yeast">
        <title>The complete sequence of K3B, a 7.9 kb fragment between PGK1 and CRY1 on chromosome III, reveals the presence of seven open reading frames.</title>
        <authorList>
            <person name="Bolle P.-A."/>
            <person name="Gilliquet V."/>
            <person name="Berben G."/>
            <person name="Dumont J."/>
            <person name="Hilger F."/>
        </authorList>
    </citation>
    <scope>NUCLEOTIDE SEQUENCE [GENOMIC DNA]</scope>
</reference>
<reference key="2">
    <citation type="journal article" date="1992" name="Nature">
        <title>The complete DNA sequence of yeast chromosome III.</title>
        <authorList>
            <person name="Oliver S.G."/>
            <person name="van der Aart Q.J.M."/>
            <person name="Agostoni-Carbone M.L."/>
            <person name="Aigle M."/>
            <person name="Alberghina L."/>
            <person name="Alexandraki D."/>
            <person name="Antoine G."/>
            <person name="Anwar R."/>
            <person name="Ballesta J.P.G."/>
            <person name="Benit P."/>
            <person name="Berben G."/>
            <person name="Bergantino E."/>
            <person name="Biteau N."/>
            <person name="Bolle P.-A."/>
            <person name="Bolotin-Fukuhara M."/>
            <person name="Brown A."/>
            <person name="Brown A.J.P."/>
            <person name="Buhler J.-M."/>
            <person name="Carcano C."/>
            <person name="Carignani G."/>
            <person name="Cederberg H."/>
            <person name="Chanet R."/>
            <person name="Contreras R."/>
            <person name="Crouzet M."/>
            <person name="Daignan-Fornier B."/>
            <person name="Defoor E."/>
            <person name="Delgado M.D."/>
            <person name="Demolder J."/>
            <person name="Doira C."/>
            <person name="Dubois E."/>
            <person name="Dujon B."/>
            <person name="Duesterhoeft A."/>
            <person name="Erdmann D."/>
            <person name="Esteban M."/>
            <person name="Fabre F."/>
            <person name="Fairhead C."/>
            <person name="Faye G."/>
            <person name="Feldmann H."/>
            <person name="Fiers W."/>
            <person name="Francingues-Gaillard M.-C."/>
            <person name="Franco L."/>
            <person name="Frontali L."/>
            <person name="Fukuhara H."/>
            <person name="Fuller L.J."/>
            <person name="Galland P."/>
            <person name="Gent M.E."/>
            <person name="Gigot D."/>
            <person name="Gilliquet V."/>
            <person name="Glansdorff N."/>
            <person name="Goffeau A."/>
            <person name="Grenson M."/>
            <person name="Grisanti P."/>
            <person name="Grivell L.A."/>
            <person name="de Haan M."/>
            <person name="Haasemann M."/>
            <person name="Hatat D."/>
            <person name="Hoenicka J."/>
            <person name="Hegemann J.H."/>
            <person name="Herbert C.J."/>
            <person name="Hilger F."/>
            <person name="Hohmann S."/>
            <person name="Hollenberg C.P."/>
            <person name="Huse K."/>
            <person name="Iborra F."/>
            <person name="Indge K.J."/>
            <person name="Isono K."/>
            <person name="Jacq C."/>
            <person name="Jacquet M."/>
            <person name="James C.M."/>
            <person name="Jauniaux J.-C."/>
            <person name="Jia Y."/>
            <person name="Jimenez A."/>
            <person name="Kelly A."/>
            <person name="Kleinhans U."/>
            <person name="Kreisl P."/>
            <person name="Lanfranchi G."/>
            <person name="Lewis C."/>
            <person name="van der Linden C.G."/>
            <person name="Lucchini G."/>
            <person name="Lutzenkirchen K."/>
            <person name="Maat M.J."/>
            <person name="Mallet L."/>
            <person name="Mannhaupt G."/>
            <person name="Martegani E."/>
            <person name="Mathieu A."/>
            <person name="Maurer C.T.C."/>
            <person name="McConnell D."/>
            <person name="McKee R.A."/>
            <person name="Messenguy F."/>
            <person name="Mewes H.-W."/>
            <person name="Molemans F."/>
            <person name="Montague M.A."/>
            <person name="Muzi Falconi M."/>
            <person name="Navas L."/>
            <person name="Newlon C.S."/>
            <person name="Noone D."/>
            <person name="Pallier C."/>
            <person name="Panzeri L."/>
            <person name="Pearson B.M."/>
            <person name="Perea J."/>
            <person name="Philippsen P."/>
            <person name="Pierard A."/>
            <person name="Planta R.J."/>
            <person name="Plevani P."/>
            <person name="Poetsch B."/>
            <person name="Pohl F.M."/>
            <person name="Purnelle B."/>
            <person name="Ramezani Rad M."/>
            <person name="Rasmussen S.W."/>
            <person name="Raynal A."/>
            <person name="Remacha M.A."/>
            <person name="Richterich P."/>
            <person name="Roberts A.B."/>
            <person name="Rodriguez F."/>
            <person name="Sanz E."/>
            <person name="Schaaff-Gerstenschlaeger I."/>
            <person name="Scherens B."/>
            <person name="Schweitzer B."/>
            <person name="Shu Y."/>
            <person name="Skala J."/>
            <person name="Slonimski P.P."/>
            <person name="Sor F."/>
            <person name="Soustelle C."/>
            <person name="Spiegelberg R."/>
            <person name="Stateva L.I."/>
            <person name="Steensma H.Y."/>
            <person name="Steiner S."/>
            <person name="Thierry A."/>
            <person name="Thireos G."/>
            <person name="Tzermia M."/>
            <person name="Urrestarazu L.A."/>
            <person name="Valle G."/>
            <person name="Vetter I."/>
            <person name="van Vliet-Reedijk J.C."/>
            <person name="Voet M."/>
            <person name="Volckaert G."/>
            <person name="Vreken P."/>
            <person name="Wang H."/>
            <person name="Warmington J.R."/>
            <person name="von Wettstein D."/>
            <person name="Wicksteed B.L."/>
            <person name="Wilson C."/>
            <person name="Wurst H."/>
            <person name="Xu G."/>
            <person name="Yoshikawa A."/>
            <person name="Zimmermann F.K."/>
            <person name="Sgouros J.G."/>
        </authorList>
    </citation>
    <scope>NUCLEOTIDE SEQUENCE [LARGE SCALE GENOMIC DNA]</scope>
    <source>
        <strain>ATCC 204508 / S288c</strain>
    </source>
</reference>
<reference key="3">
    <citation type="journal article" date="2014" name="G3 (Bethesda)">
        <title>The reference genome sequence of Saccharomyces cerevisiae: Then and now.</title>
        <authorList>
            <person name="Engel S.R."/>
            <person name="Dietrich F.S."/>
            <person name="Fisk D.G."/>
            <person name="Binkley G."/>
            <person name="Balakrishnan R."/>
            <person name="Costanzo M.C."/>
            <person name="Dwight S.S."/>
            <person name="Hitz B.C."/>
            <person name="Karra K."/>
            <person name="Nash R.S."/>
            <person name="Weng S."/>
            <person name="Wong E.D."/>
            <person name="Lloyd P."/>
            <person name="Skrzypek M.S."/>
            <person name="Miyasato S.R."/>
            <person name="Simison M."/>
            <person name="Cherry J.M."/>
        </authorList>
    </citation>
    <scope>GENOME REANNOTATION</scope>
    <source>
        <strain>ATCC 204508 / S288c</strain>
    </source>
</reference>
<reference key="4">
    <citation type="journal article" date="1997" name="Eur. J. Biochem.">
        <title>Mitochondrial asparaginyl-tRNA synthetase is encoded by the yeast nuclear gene YCR24c.</title>
        <authorList>
            <person name="Landrieu I."/>
            <person name="Vandenbol M."/>
            <person name="Hartlein M."/>
            <person name="Portetelle D."/>
        </authorList>
    </citation>
    <scope>FUNCTION</scope>
    <scope>CATALYTIC ACTIVITY</scope>
</reference>
<reference key="5">
    <citation type="journal article" date="2003" name="Nature">
        <title>Global analysis of protein expression in yeast.</title>
        <authorList>
            <person name="Ghaemmaghami S."/>
            <person name="Huh W.-K."/>
            <person name="Bower K."/>
            <person name="Howson R.W."/>
            <person name="Belle A."/>
            <person name="Dephoure N."/>
            <person name="O'Shea E.K."/>
            <person name="Weissman J.S."/>
        </authorList>
    </citation>
    <scope>LEVEL OF PROTEIN EXPRESSION [LARGE SCALE ANALYSIS]</scope>
</reference>
<keyword id="KW-0030">Aminoacyl-tRNA synthetase</keyword>
<keyword id="KW-0067">ATP-binding</keyword>
<keyword id="KW-0436">Ligase</keyword>
<keyword id="KW-0496">Mitochondrion</keyword>
<keyword id="KW-0547">Nucleotide-binding</keyword>
<keyword id="KW-0648">Protein biosynthesis</keyword>
<keyword id="KW-1185">Reference proteome</keyword>
<keyword id="KW-0809">Transit peptide</keyword>
<name>SYNM_YEAST</name>
<feature type="transit peptide" description="Mitochondrion" evidence="1">
    <location>
        <begin position="1"/>
        <end status="unknown"/>
    </location>
</feature>
<feature type="chain" id="PRO_0000035801" description="Asparagine--tRNA ligase, mitochondrial">
    <location>
        <begin status="unknown"/>
        <end position="492"/>
    </location>
</feature>
<protein>
    <recommendedName>
        <fullName>Asparagine--tRNA ligase, mitochondrial</fullName>
        <ecNumber evidence="3">6.1.1.22</ecNumber>
    </recommendedName>
    <alternativeName>
        <fullName>Asparaginyl-tRNA synthetase</fullName>
        <shortName>AsnRS</shortName>
    </alternativeName>
</protein>
<dbReference type="EC" id="6.1.1.22" evidence="3"/>
<dbReference type="EMBL" id="X59720">
    <property type="protein sequence ID" value="CAA42316.1"/>
    <property type="molecule type" value="Genomic_DNA"/>
</dbReference>
<dbReference type="EMBL" id="BK006937">
    <property type="protein sequence ID" value="DAA07502.1"/>
    <property type="molecule type" value="Genomic_DNA"/>
</dbReference>
<dbReference type="PIR" id="S19435">
    <property type="entry name" value="S19435"/>
</dbReference>
<dbReference type="RefSeq" id="NP_009953.1">
    <property type="nucleotide sequence ID" value="NM_001178738.1"/>
</dbReference>
<dbReference type="SMR" id="P25345"/>
<dbReference type="BioGRID" id="31006">
    <property type="interactions" value="180"/>
</dbReference>
<dbReference type="DIP" id="DIP-2597N"/>
<dbReference type="FunCoup" id="P25345">
    <property type="interactions" value="582"/>
</dbReference>
<dbReference type="IntAct" id="P25345">
    <property type="interactions" value="11"/>
</dbReference>
<dbReference type="MINT" id="P25345"/>
<dbReference type="STRING" id="4932.YCR024C"/>
<dbReference type="PaxDb" id="4932-YCR024C"/>
<dbReference type="PeptideAtlas" id="P25345"/>
<dbReference type="EnsemblFungi" id="YCR024C_mRNA">
    <property type="protein sequence ID" value="YCR024C"/>
    <property type="gene ID" value="YCR024C"/>
</dbReference>
<dbReference type="GeneID" id="850388"/>
<dbReference type="KEGG" id="sce:YCR024C"/>
<dbReference type="AGR" id="SGD:S000000618"/>
<dbReference type="SGD" id="S000000618">
    <property type="gene designation" value="SLM5"/>
</dbReference>
<dbReference type="VEuPathDB" id="FungiDB:YCR024C"/>
<dbReference type="eggNOG" id="KOG0554">
    <property type="taxonomic scope" value="Eukaryota"/>
</dbReference>
<dbReference type="GeneTree" id="ENSGT01030000234618"/>
<dbReference type="HOGENOM" id="CLU_004553_2_0_1"/>
<dbReference type="InParanoid" id="P25345"/>
<dbReference type="OMA" id="PEMAFYD"/>
<dbReference type="OrthoDB" id="43906at2759"/>
<dbReference type="BioCyc" id="YEAST:G3O-29339-MONOMER"/>
<dbReference type="BioGRID-ORCS" id="850388">
    <property type="hits" value="7 hits in 10 CRISPR screens"/>
</dbReference>
<dbReference type="PRO" id="PR:P25345"/>
<dbReference type="Proteomes" id="UP000002311">
    <property type="component" value="Chromosome III"/>
</dbReference>
<dbReference type="RNAct" id="P25345">
    <property type="molecule type" value="protein"/>
</dbReference>
<dbReference type="GO" id="GO:0005759">
    <property type="term" value="C:mitochondrial matrix"/>
    <property type="evidence" value="ECO:0007669"/>
    <property type="project" value="UniProtKB-SubCell"/>
</dbReference>
<dbReference type="GO" id="GO:0005739">
    <property type="term" value="C:mitochondrion"/>
    <property type="evidence" value="ECO:0000315"/>
    <property type="project" value="SGD"/>
</dbReference>
<dbReference type="GO" id="GO:0004816">
    <property type="term" value="F:asparagine-tRNA ligase activity"/>
    <property type="evidence" value="ECO:0000314"/>
    <property type="project" value="SGD"/>
</dbReference>
<dbReference type="GO" id="GO:0005524">
    <property type="term" value="F:ATP binding"/>
    <property type="evidence" value="ECO:0007669"/>
    <property type="project" value="UniProtKB-KW"/>
</dbReference>
<dbReference type="GO" id="GO:0003676">
    <property type="term" value="F:nucleic acid binding"/>
    <property type="evidence" value="ECO:0007669"/>
    <property type="project" value="InterPro"/>
</dbReference>
<dbReference type="GO" id="GO:0006421">
    <property type="term" value="P:asparaginyl-tRNA aminoacylation"/>
    <property type="evidence" value="ECO:0000314"/>
    <property type="project" value="SGD"/>
</dbReference>
<dbReference type="GO" id="GO:0070145">
    <property type="term" value="P:mitochondrial asparaginyl-tRNA aminoacylation"/>
    <property type="evidence" value="ECO:0000315"/>
    <property type="project" value="SGD"/>
</dbReference>
<dbReference type="CDD" id="cd00776">
    <property type="entry name" value="AsxRS_core"/>
    <property type="match status" value="1"/>
</dbReference>
<dbReference type="CDD" id="cd04318">
    <property type="entry name" value="EcAsnRS_like_N"/>
    <property type="match status" value="1"/>
</dbReference>
<dbReference type="FunFam" id="3.30.930.10:FF:000016">
    <property type="entry name" value="Asparagine--tRNA ligase"/>
    <property type="match status" value="1"/>
</dbReference>
<dbReference type="Gene3D" id="3.30.930.10">
    <property type="entry name" value="Bira Bifunctional Protein, Domain 2"/>
    <property type="match status" value="1"/>
</dbReference>
<dbReference type="Gene3D" id="2.40.50.140">
    <property type="entry name" value="Nucleic acid-binding proteins"/>
    <property type="match status" value="1"/>
</dbReference>
<dbReference type="InterPro" id="IPR004364">
    <property type="entry name" value="Aa-tRNA-synt_II"/>
</dbReference>
<dbReference type="InterPro" id="IPR006195">
    <property type="entry name" value="aa-tRNA-synth_II"/>
</dbReference>
<dbReference type="InterPro" id="IPR045864">
    <property type="entry name" value="aa-tRNA-synth_II/BPL/LPL"/>
</dbReference>
<dbReference type="InterPro" id="IPR004522">
    <property type="entry name" value="Asn-tRNA-ligase"/>
</dbReference>
<dbReference type="InterPro" id="IPR002312">
    <property type="entry name" value="Asp/Asn-tRNA-synth_IIb"/>
</dbReference>
<dbReference type="InterPro" id="IPR012340">
    <property type="entry name" value="NA-bd_OB-fold"/>
</dbReference>
<dbReference type="InterPro" id="IPR004365">
    <property type="entry name" value="NA-bd_OB_tRNA"/>
</dbReference>
<dbReference type="NCBIfam" id="TIGR00457">
    <property type="entry name" value="asnS"/>
    <property type="match status" value="1"/>
</dbReference>
<dbReference type="NCBIfam" id="NF003037">
    <property type="entry name" value="PRK03932.1"/>
    <property type="match status" value="1"/>
</dbReference>
<dbReference type="PANTHER" id="PTHR22594:SF34">
    <property type="entry name" value="ASPARAGINE--TRNA LIGASE, MITOCHONDRIAL-RELATED"/>
    <property type="match status" value="1"/>
</dbReference>
<dbReference type="PANTHER" id="PTHR22594">
    <property type="entry name" value="ASPARTYL/LYSYL-TRNA SYNTHETASE"/>
    <property type="match status" value="1"/>
</dbReference>
<dbReference type="Pfam" id="PF00152">
    <property type="entry name" value="tRNA-synt_2"/>
    <property type="match status" value="1"/>
</dbReference>
<dbReference type="Pfam" id="PF01336">
    <property type="entry name" value="tRNA_anti-codon"/>
    <property type="match status" value="1"/>
</dbReference>
<dbReference type="PRINTS" id="PR01042">
    <property type="entry name" value="TRNASYNTHASP"/>
</dbReference>
<dbReference type="SUPFAM" id="SSF55681">
    <property type="entry name" value="Class II aaRS and biotin synthetases"/>
    <property type="match status" value="1"/>
</dbReference>
<dbReference type="SUPFAM" id="SSF50249">
    <property type="entry name" value="Nucleic acid-binding proteins"/>
    <property type="match status" value="1"/>
</dbReference>
<dbReference type="PROSITE" id="PS50862">
    <property type="entry name" value="AA_TRNA_LIGASE_II"/>
    <property type="match status" value="1"/>
</dbReference>
<comment type="function">
    <text evidence="3">Catalyzes the attachment of asparagine to tRNA(Asn) in the mitochondrion.</text>
</comment>
<comment type="catalytic activity">
    <reaction evidence="3">
        <text>tRNA(Asn) + L-asparagine + ATP = L-asparaginyl-tRNA(Asn) + AMP + diphosphate + H(+)</text>
        <dbReference type="Rhea" id="RHEA:11180"/>
        <dbReference type="Rhea" id="RHEA-COMP:9659"/>
        <dbReference type="Rhea" id="RHEA-COMP:9674"/>
        <dbReference type="ChEBI" id="CHEBI:15378"/>
        <dbReference type="ChEBI" id="CHEBI:30616"/>
        <dbReference type="ChEBI" id="CHEBI:33019"/>
        <dbReference type="ChEBI" id="CHEBI:58048"/>
        <dbReference type="ChEBI" id="CHEBI:78442"/>
        <dbReference type="ChEBI" id="CHEBI:78515"/>
        <dbReference type="ChEBI" id="CHEBI:456215"/>
        <dbReference type="EC" id="6.1.1.22"/>
    </reaction>
    <physiologicalReaction direction="left-to-right" evidence="3">
        <dbReference type="Rhea" id="RHEA:11181"/>
    </physiologicalReaction>
</comment>
<comment type="subcellular location">
    <subcellularLocation>
        <location evidence="5">Mitochondrion matrix</location>
    </subcellularLocation>
</comment>
<comment type="miscellaneous">
    <text evidence="2">Present with 784 molecules/cell in log phase SD medium.</text>
</comment>
<comment type="similarity">
    <text evidence="4">Belongs to the class-II aminoacyl-tRNA synthetase family.</text>
</comment>